<organism>
    <name type="scientific">Shewanella sp. (strain MR-4)</name>
    <dbReference type="NCBI Taxonomy" id="60480"/>
    <lineage>
        <taxon>Bacteria</taxon>
        <taxon>Pseudomonadati</taxon>
        <taxon>Pseudomonadota</taxon>
        <taxon>Gammaproteobacteria</taxon>
        <taxon>Alteromonadales</taxon>
        <taxon>Shewanellaceae</taxon>
        <taxon>Shewanella</taxon>
    </lineage>
</organism>
<reference key="1">
    <citation type="submission" date="2006-08" db="EMBL/GenBank/DDBJ databases">
        <title>Complete sequence of Shewanella sp. MR-4.</title>
        <authorList>
            <consortium name="US DOE Joint Genome Institute"/>
            <person name="Copeland A."/>
            <person name="Lucas S."/>
            <person name="Lapidus A."/>
            <person name="Barry K."/>
            <person name="Detter J.C."/>
            <person name="Glavina del Rio T."/>
            <person name="Hammon N."/>
            <person name="Israni S."/>
            <person name="Dalin E."/>
            <person name="Tice H."/>
            <person name="Pitluck S."/>
            <person name="Kiss H."/>
            <person name="Brettin T."/>
            <person name="Bruce D."/>
            <person name="Han C."/>
            <person name="Tapia R."/>
            <person name="Gilna P."/>
            <person name="Schmutz J."/>
            <person name="Larimer F."/>
            <person name="Land M."/>
            <person name="Hauser L."/>
            <person name="Kyrpides N."/>
            <person name="Mikhailova N."/>
            <person name="Nealson K."/>
            <person name="Konstantinidis K."/>
            <person name="Klappenbach J."/>
            <person name="Tiedje J."/>
            <person name="Richardson P."/>
        </authorList>
    </citation>
    <scope>NUCLEOTIDE SEQUENCE [LARGE SCALE GENOMIC DNA]</scope>
    <source>
        <strain>MR-4</strain>
    </source>
</reference>
<accession>Q0HKU9</accession>
<name>PUR4_SHESM</name>
<proteinExistence type="inferred from homology"/>
<sequence>MEIIRGAPALSTFRVQKLMEACVNAALPVRQIYAEYVHLADLSELLETNEREQLEKILTYGPAIEAHTPQGSLLFVTPRPGTISPWSSKATDIAHNCGLGKVKRLERGVAYYVESDTLTVEQQQTLKGLLHDRMVEVVLDDFAKADVLFKRTEPAPFKSVNVLAEGRRALEVANVEMGLALAEDEIDYLVENFVRLNRNPNDIELMMFAQANSEHCRHKIFNADWTIDGEAQPKSLFKMIKNTFETTPDHVLSAYKDNAAVMEGSVAGRFFPDPNGVYSYHTEPMHVLMKVETHNHPTAISPYPGAATGSGGEIRDEGATGRGSKPKAGLTGFSVSNLKIPGFVQPWEGSYGKPDRIVSALDIMTEGPLGGAAFNNEFGRPALLGYFRTYEQEVSSHNGVEVRGYHKPIMLAGGLGNIREEHVQKGEITVGAKLIVLGGPAMNIGLGGGAASSMASGQSSEDLDFASVQRENPEMERRCQEVIDRCWQLGDKNPIQFIHDVGAGGLSNAFPELVNDGGRGGIFNLRNVPSDEPGMSPLEIWCNESQERYVLSVAAEDLPLFTAICERERAPFAVVGEATQEQHLTLADSHFDNNPIDLPLEVLLGKAPKMSRNVVSAKAVSPALEQSNIDVKEAVKRILSLPTVADKTFLITIGDRTVTGLVNRDQMVGPWQVPVADCAVTAASFDTYAGEAMSMGERTPLALLDFGASARMAVAESIMNIAGADIGSFKRIKLSANWMSAAGHPGEDAGLYEAVKAVGEELCPELSLTIPVGKDSMSMKTAWQQDGANKTVTAPMSLVISAFGVVQDIRNTVTPELRSDKGETSLLLVDLGAGKNRLGGSCLAQVYGELGDIAPDLDDAALLRGFFETMQKLVAKKSVIAYHDRSDGGLFTTLVEMAFAGNTGLSIDLSALQGTDVERLFNEELGGVLQVSRADAELIAAQFAQAGVPCHMIGTLANDQRVTIKDGAREVFSETRVALRTLWSETTYRMQALRDNPACALEEFKLKQDETDLGLTVNLSFDPSEDVAAPYILKGAAPKMAILREQGVNSHVEMAAAFDRAGFESLDVHMSDILSGRISLEEFQGLVACGGFSYGDVLGAGEGWAKSILFNERARDEFSRFFERDSSFALGVCNGCQMLSNLKEIIPGSEHWPRFVRNRSERFEARFSLVEVQQSPSLFFQGMAGSRMPIAVSHGEGHAEFASAQALALAEASGTIALRFVNGNGEIATQYPQNPNGSPNGLTGICTTDGRVTLMMPHPERVFRTVANSWHPDNWGEDSPWMRMFRNARVNLG</sequence>
<protein>
    <recommendedName>
        <fullName evidence="1">Phosphoribosylformylglycinamidine synthase</fullName>
        <shortName evidence="1">FGAM synthase</shortName>
        <shortName evidence="1">FGAMS</shortName>
        <ecNumber evidence="1">6.3.5.3</ecNumber>
    </recommendedName>
    <alternativeName>
        <fullName evidence="1">Formylglycinamide ribonucleotide amidotransferase</fullName>
        <shortName evidence="1">FGAR amidotransferase</shortName>
        <shortName evidence="1">FGAR-AT</shortName>
    </alternativeName>
</protein>
<feature type="chain" id="PRO_0000264595" description="Phosphoribosylformylglycinamidine synthase">
    <location>
        <begin position="1"/>
        <end position="1293"/>
    </location>
</feature>
<feature type="domain" description="Glutamine amidotransferase type-1" evidence="1">
    <location>
        <begin position="1040"/>
        <end position="1293"/>
    </location>
</feature>
<feature type="region of interest" description="Disordered" evidence="2">
    <location>
        <begin position="305"/>
        <end position="327"/>
    </location>
</feature>
<feature type="active site" description="Nucleophile" evidence="1">
    <location>
        <position position="1133"/>
    </location>
</feature>
<feature type="active site" evidence="1">
    <location>
        <position position="1258"/>
    </location>
</feature>
<feature type="active site" evidence="1">
    <location>
        <position position="1260"/>
    </location>
</feature>
<feature type="binding site" evidence="1">
    <location>
        <begin position="305"/>
        <end position="316"/>
    </location>
    <ligand>
        <name>ATP</name>
        <dbReference type="ChEBI" id="CHEBI:30616"/>
    </ligand>
</feature>
<feature type="binding site" evidence="1">
    <location>
        <position position="676"/>
    </location>
    <ligand>
        <name>ATP</name>
        <dbReference type="ChEBI" id="CHEBI:30616"/>
    </ligand>
</feature>
<feature type="binding site" evidence="1">
    <location>
        <position position="677"/>
    </location>
    <ligand>
        <name>Mg(2+)</name>
        <dbReference type="ChEBI" id="CHEBI:18420"/>
    </ligand>
</feature>
<feature type="binding site" evidence="1">
    <location>
        <position position="716"/>
    </location>
    <ligand>
        <name>Mg(2+)</name>
        <dbReference type="ChEBI" id="CHEBI:18420"/>
    </ligand>
</feature>
<feature type="binding site" evidence="1">
    <location>
        <position position="720"/>
    </location>
    <ligand>
        <name>Mg(2+)</name>
        <dbReference type="ChEBI" id="CHEBI:18420"/>
    </ligand>
</feature>
<feature type="binding site" evidence="1">
    <location>
        <position position="884"/>
    </location>
    <ligand>
        <name>Mg(2+)</name>
        <dbReference type="ChEBI" id="CHEBI:18420"/>
    </ligand>
</feature>
<feature type="binding site" evidence="1">
    <location>
        <position position="886"/>
    </location>
    <ligand>
        <name>ATP</name>
        <dbReference type="ChEBI" id="CHEBI:30616"/>
    </ligand>
</feature>
<dbReference type="EC" id="6.3.5.3" evidence="1"/>
<dbReference type="EMBL" id="CP000446">
    <property type="protein sequence ID" value="ABI38318.1"/>
    <property type="molecule type" value="Genomic_DNA"/>
</dbReference>
<dbReference type="RefSeq" id="WP_011622026.1">
    <property type="nucleotide sequence ID" value="NC_008321.1"/>
</dbReference>
<dbReference type="SMR" id="Q0HKU9"/>
<dbReference type="MEROPS" id="C56.972"/>
<dbReference type="KEGG" id="she:Shewmr4_1238"/>
<dbReference type="HOGENOM" id="CLU_001031_0_2_6"/>
<dbReference type="UniPathway" id="UPA00074">
    <property type="reaction ID" value="UER00128"/>
</dbReference>
<dbReference type="GO" id="GO:0005737">
    <property type="term" value="C:cytoplasm"/>
    <property type="evidence" value="ECO:0007669"/>
    <property type="project" value="UniProtKB-SubCell"/>
</dbReference>
<dbReference type="GO" id="GO:0005524">
    <property type="term" value="F:ATP binding"/>
    <property type="evidence" value="ECO:0007669"/>
    <property type="project" value="UniProtKB-UniRule"/>
</dbReference>
<dbReference type="GO" id="GO:0046872">
    <property type="term" value="F:metal ion binding"/>
    <property type="evidence" value="ECO:0007669"/>
    <property type="project" value="UniProtKB-KW"/>
</dbReference>
<dbReference type="GO" id="GO:0004642">
    <property type="term" value="F:phosphoribosylformylglycinamidine synthase activity"/>
    <property type="evidence" value="ECO:0007669"/>
    <property type="project" value="UniProtKB-UniRule"/>
</dbReference>
<dbReference type="GO" id="GO:0006189">
    <property type="term" value="P:'de novo' IMP biosynthetic process"/>
    <property type="evidence" value="ECO:0007669"/>
    <property type="project" value="UniProtKB-UniRule"/>
</dbReference>
<dbReference type="CDD" id="cd01740">
    <property type="entry name" value="GATase1_FGAR_AT"/>
    <property type="match status" value="1"/>
</dbReference>
<dbReference type="CDD" id="cd02203">
    <property type="entry name" value="PurL_repeat1"/>
    <property type="match status" value="1"/>
</dbReference>
<dbReference type="CDD" id="cd02204">
    <property type="entry name" value="PurL_repeat2"/>
    <property type="match status" value="1"/>
</dbReference>
<dbReference type="FunFam" id="1.10.8.750:FF:000002">
    <property type="entry name" value="Phosphoribosylformylglycinamidine synthase"/>
    <property type="match status" value="1"/>
</dbReference>
<dbReference type="FunFam" id="3.30.1330.10:FF:000002">
    <property type="entry name" value="Phosphoribosylformylglycinamidine synthase"/>
    <property type="match status" value="1"/>
</dbReference>
<dbReference type="FunFam" id="3.30.1330.10:FF:000005">
    <property type="entry name" value="Phosphoribosylformylglycinamidine synthase"/>
    <property type="match status" value="1"/>
</dbReference>
<dbReference type="FunFam" id="3.40.50.880:FF:000008">
    <property type="entry name" value="Phosphoribosylformylglycinamidine synthase"/>
    <property type="match status" value="1"/>
</dbReference>
<dbReference type="FunFam" id="3.90.650.10:FF:000002">
    <property type="entry name" value="Phosphoribosylformylglycinamidine synthase"/>
    <property type="match status" value="1"/>
</dbReference>
<dbReference type="FunFam" id="3.90.650.10:FF:000005">
    <property type="entry name" value="Phosphoribosylformylglycinamidine synthase"/>
    <property type="match status" value="1"/>
</dbReference>
<dbReference type="Gene3D" id="3.40.50.880">
    <property type="match status" value="1"/>
</dbReference>
<dbReference type="Gene3D" id="1.10.8.750">
    <property type="entry name" value="Phosphoribosylformylglycinamidine synthase, linker domain"/>
    <property type="match status" value="1"/>
</dbReference>
<dbReference type="Gene3D" id="3.90.650.10">
    <property type="entry name" value="PurM-like C-terminal domain"/>
    <property type="match status" value="2"/>
</dbReference>
<dbReference type="Gene3D" id="3.30.1330.10">
    <property type="entry name" value="PurM-like, N-terminal domain"/>
    <property type="match status" value="2"/>
</dbReference>
<dbReference type="HAMAP" id="MF_00419">
    <property type="entry name" value="PurL_1"/>
    <property type="match status" value="1"/>
</dbReference>
<dbReference type="InterPro" id="IPR029062">
    <property type="entry name" value="Class_I_gatase-like"/>
</dbReference>
<dbReference type="InterPro" id="IPR040707">
    <property type="entry name" value="FGAR-AT_N"/>
</dbReference>
<dbReference type="InterPro" id="IPR055181">
    <property type="entry name" value="FGAR-AT_PurM_N-like"/>
</dbReference>
<dbReference type="InterPro" id="IPR010073">
    <property type="entry name" value="PurL_large"/>
</dbReference>
<dbReference type="InterPro" id="IPR041609">
    <property type="entry name" value="PurL_linker"/>
</dbReference>
<dbReference type="InterPro" id="IPR010918">
    <property type="entry name" value="PurM-like_C_dom"/>
</dbReference>
<dbReference type="InterPro" id="IPR036676">
    <property type="entry name" value="PurM-like_C_sf"/>
</dbReference>
<dbReference type="InterPro" id="IPR036921">
    <property type="entry name" value="PurM-like_N_sf"/>
</dbReference>
<dbReference type="InterPro" id="IPR036604">
    <property type="entry name" value="PurS-like_sf"/>
</dbReference>
<dbReference type="NCBIfam" id="TIGR01735">
    <property type="entry name" value="FGAM_synt"/>
    <property type="match status" value="1"/>
</dbReference>
<dbReference type="NCBIfam" id="NF003672">
    <property type="entry name" value="PRK05297.1"/>
    <property type="match status" value="1"/>
</dbReference>
<dbReference type="PANTHER" id="PTHR10099">
    <property type="entry name" value="PHOSPHORIBOSYLFORMYLGLYCINAMIDINE SYNTHASE"/>
    <property type="match status" value="1"/>
</dbReference>
<dbReference type="PANTHER" id="PTHR10099:SF1">
    <property type="entry name" value="PHOSPHORIBOSYLFORMYLGLYCINAMIDINE SYNTHASE"/>
    <property type="match status" value="1"/>
</dbReference>
<dbReference type="Pfam" id="PF02769">
    <property type="entry name" value="AIRS_C"/>
    <property type="match status" value="2"/>
</dbReference>
<dbReference type="Pfam" id="PF18072">
    <property type="entry name" value="FGAR-AT_linker"/>
    <property type="match status" value="1"/>
</dbReference>
<dbReference type="Pfam" id="PF18076">
    <property type="entry name" value="FGAR-AT_N"/>
    <property type="match status" value="1"/>
</dbReference>
<dbReference type="Pfam" id="PF22689">
    <property type="entry name" value="FGAR-AT_PurM_N-like"/>
    <property type="match status" value="1"/>
</dbReference>
<dbReference type="Pfam" id="PF13507">
    <property type="entry name" value="GATase_5"/>
    <property type="match status" value="1"/>
</dbReference>
<dbReference type="SMART" id="SM01211">
    <property type="entry name" value="GATase_5"/>
    <property type="match status" value="1"/>
</dbReference>
<dbReference type="SUPFAM" id="SSF52317">
    <property type="entry name" value="Class I glutamine amidotransferase-like"/>
    <property type="match status" value="1"/>
</dbReference>
<dbReference type="SUPFAM" id="SSF109736">
    <property type="entry name" value="FGAM synthase PurL, linker domain"/>
    <property type="match status" value="1"/>
</dbReference>
<dbReference type="SUPFAM" id="SSF56042">
    <property type="entry name" value="PurM C-terminal domain-like"/>
    <property type="match status" value="2"/>
</dbReference>
<dbReference type="SUPFAM" id="SSF55326">
    <property type="entry name" value="PurM N-terminal domain-like"/>
    <property type="match status" value="2"/>
</dbReference>
<dbReference type="SUPFAM" id="SSF82697">
    <property type="entry name" value="PurS-like"/>
    <property type="match status" value="1"/>
</dbReference>
<dbReference type="PROSITE" id="PS51273">
    <property type="entry name" value="GATASE_TYPE_1"/>
    <property type="match status" value="1"/>
</dbReference>
<comment type="function">
    <text evidence="1">Phosphoribosylformylglycinamidine synthase involved in the purines biosynthetic pathway. Catalyzes the ATP-dependent conversion of formylglycinamide ribonucleotide (FGAR) and glutamine to yield formylglycinamidine ribonucleotide (FGAM) and glutamate.</text>
</comment>
<comment type="catalytic activity">
    <reaction evidence="1">
        <text>N(2)-formyl-N(1)-(5-phospho-beta-D-ribosyl)glycinamide + L-glutamine + ATP + H2O = 2-formamido-N(1)-(5-O-phospho-beta-D-ribosyl)acetamidine + L-glutamate + ADP + phosphate + H(+)</text>
        <dbReference type="Rhea" id="RHEA:17129"/>
        <dbReference type="ChEBI" id="CHEBI:15377"/>
        <dbReference type="ChEBI" id="CHEBI:15378"/>
        <dbReference type="ChEBI" id="CHEBI:29985"/>
        <dbReference type="ChEBI" id="CHEBI:30616"/>
        <dbReference type="ChEBI" id="CHEBI:43474"/>
        <dbReference type="ChEBI" id="CHEBI:58359"/>
        <dbReference type="ChEBI" id="CHEBI:147286"/>
        <dbReference type="ChEBI" id="CHEBI:147287"/>
        <dbReference type="ChEBI" id="CHEBI:456216"/>
        <dbReference type="EC" id="6.3.5.3"/>
    </reaction>
</comment>
<comment type="pathway">
    <text evidence="1">Purine metabolism; IMP biosynthesis via de novo pathway; 5-amino-1-(5-phospho-D-ribosyl)imidazole from N(2)-formyl-N(1)-(5-phospho-D-ribosyl)glycinamide: step 1/2.</text>
</comment>
<comment type="subunit">
    <text evidence="1">Monomer.</text>
</comment>
<comment type="subcellular location">
    <subcellularLocation>
        <location evidence="1">Cytoplasm</location>
    </subcellularLocation>
</comment>
<comment type="similarity">
    <text evidence="1">In the N-terminal section; belongs to the FGAMS family.</text>
</comment>
<keyword id="KW-0067">ATP-binding</keyword>
<keyword id="KW-0963">Cytoplasm</keyword>
<keyword id="KW-0315">Glutamine amidotransferase</keyword>
<keyword id="KW-0436">Ligase</keyword>
<keyword id="KW-0460">Magnesium</keyword>
<keyword id="KW-0479">Metal-binding</keyword>
<keyword id="KW-0547">Nucleotide-binding</keyword>
<keyword id="KW-0658">Purine biosynthesis</keyword>
<gene>
    <name evidence="1" type="primary">purL</name>
    <name type="ordered locus">Shewmr4_1238</name>
</gene>
<evidence type="ECO:0000255" key="1">
    <source>
        <dbReference type="HAMAP-Rule" id="MF_00419"/>
    </source>
</evidence>
<evidence type="ECO:0000256" key="2">
    <source>
        <dbReference type="SAM" id="MobiDB-lite"/>
    </source>
</evidence>